<keyword id="KW-0903">Direct protein sequencing</keyword>
<keyword id="KW-1015">Disulfide bond</keyword>
<keyword id="KW-1214">G-protein coupled acetylcholine receptor impairing toxin</keyword>
<keyword id="KW-1213">G-protein coupled receptor impairing toxin</keyword>
<keyword id="KW-0528">Neurotoxin</keyword>
<keyword id="KW-0629">Postsynaptic neurotoxin</keyword>
<keyword id="KW-0964">Secreted</keyword>
<keyword id="KW-0800">Toxin</keyword>
<organism>
    <name type="scientific">Micrurus lemniscatus</name>
    <name type="common">South American coral snake</name>
    <dbReference type="NCBI Taxonomy" id="129464"/>
    <lineage>
        <taxon>Eukaryota</taxon>
        <taxon>Metazoa</taxon>
        <taxon>Chordata</taxon>
        <taxon>Craniata</taxon>
        <taxon>Vertebrata</taxon>
        <taxon>Euteleostomi</taxon>
        <taxon>Lepidosauria</taxon>
        <taxon>Squamata</taxon>
        <taxon>Bifurcata</taxon>
        <taxon>Unidentata</taxon>
        <taxon>Episquamata</taxon>
        <taxon>Toxicofera</taxon>
        <taxon>Serpentes</taxon>
        <taxon>Colubroidea</taxon>
        <taxon>Elapidae</taxon>
        <taxon>Elapinae</taxon>
        <taxon>Micrurus</taxon>
    </lineage>
</organism>
<protein>
    <recommendedName>
        <fullName>Muscarinic toxin Mlalpha</fullName>
        <shortName>MT-Mlalpha</shortName>
    </recommendedName>
</protein>
<name>3X_MICLE</name>
<comment type="function">
    <text evidence="2">Probably blocks muscarinic acetylcholine receptors (CHRM), since it inhibits the binding of the selective muscarinic ligand [3H]QNB and inhibits the carbachol-induced [3H]inositol phosphate accumulation in rat hippocampus.</text>
</comment>
<comment type="subcellular location">
    <subcellularLocation>
        <location evidence="2">Secreted</location>
    </subcellularLocation>
</comment>
<comment type="tissue specificity">
    <text evidence="3">Expressed by the venom gland.</text>
</comment>
<comment type="PTM">
    <text evidence="1">Contains 4 disulfide bonds.</text>
</comment>
<comment type="mass spectrometry" mass="7048.12" method="Electrospray" evidence="2"/>
<comment type="similarity">
    <text evidence="3">Belongs to the three-finger toxin family.</text>
</comment>
<reference key="1">
    <citation type="journal article" date="2011" name="Life Sci.">
        <title>Characterization of a new muscarinic toxin from the venom of the Brazilian coral snake Micrurus lemniscatus in rat hippocampus.</title>
        <authorList>
            <person name="da Silva D.C."/>
            <person name="de Medeiros W.A."/>
            <person name="Batista I.D."/>
            <person name="Pimenta D.C."/>
            <person name="Lebrun I."/>
            <person name="Abdalla F.M."/>
            <person name="Sandoval M.R."/>
        </authorList>
    </citation>
    <scope>PROTEIN SEQUENCE</scope>
    <scope>FUNCTION</scope>
    <scope>SUBCELLULAR LOCATION</scope>
    <scope>MASS SPECTROMETRY</scope>
    <source>
        <tissue>Venom</tissue>
    </source>
</reference>
<accession>P0DJB0</accession>
<proteinExistence type="evidence at protein level"/>
<sequence length="12" mass="1352">LICFICFSPTAH</sequence>
<evidence type="ECO:0000250" key="1"/>
<evidence type="ECO:0000269" key="2">
    <source>
    </source>
</evidence>
<evidence type="ECO:0000305" key="3"/>
<feature type="chain" id="PRO_0000414301" description="Muscarinic toxin Mlalpha">
    <location>
        <begin position="1"/>
        <end position="12" status="greater than"/>
    </location>
</feature>
<feature type="non-terminal residue">
    <location>
        <position position="12"/>
    </location>
</feature>
<dbReference type="GO" id="GO:0005576">
    <property type="term" value="C:extracellular region"/>
    <property type="evidence" value="ECO:0007669"/>
    <property type="project" value="UniProtKB-SubCell"/>
</dbReference>
<dbReference type="GO" id="GO:0090729">
    <property type="term" value="F:toxin activity"/>
    <property type="evidence" value="ECO:0007669"/>
    <property type="project" value="UniProtKB-KW"/>
</dbReference>